<accession>Q61191</accession>
<accession>B1AUX1</accession>
<accession>Q684R1</accession>
<accession>Q7TSB0</accession>
<accession>Q8C2D0</accession>
<accession>Q9QWH2</accession>
<keyword id="KW-0002">3D-structure</keyword>
<keyword id="KW-0007">Acetylation</keyword>
<keyword id="KW-0068">Autocatalytic cleavage</keyword>
<keyword id="KW-0131">Cell cycle</keyword>
<keyword id="KW-0156">Chromatin regulator</keyword>
<keyword id="KW-0963">Cytoplasm</keyword>
<keyword id="KW-0325">Glycoprotein</keyword>
<keyword id="KW-1017">Isopeptide bond</keyword>
<keyword id="KW-0880">Kelch repeat</keyword>
<keyword id="KW-0488">Methylation</keyword>
<keyword id="KW-0539">Nucleus</keyword>
<keyword id="KW-0597">Phosphoprotein</keyword>
<keyword id="KW-1185">Reference proteome</keyword>
<keyword id="KW-0677">Repeat</keyword>
<keyword id="KW-0832">Ubl conjugation</keyword>
<gene>
    <name evidence="15" type="primary">Hcfc1</name>
</gene>
<comment type="function">
    <text evidence="1 2 8 9">Transcriptional coregulator (By similarity). Serves as a scaffold protein, bridging interactions between transcription factors, including THAP11 and ZNF143, and transcriptional coregulators (By similarity). Involved in control of the cell cycle (PubMed:9334261, PubMed:9990006). Also antagonizes transactivation by ZBTB17 and GABP2; represses ZBTB17 activation of the p15(INK4b) promoter and inhibits its ability to recruit p300 (By similarity). Coactivator for EGR2 and GABP2 (By similarity). Tethers the chromatin modifying Set1/Ash2 histone H3 'Lys-4' methyltransferase (H3K4me) and Sin3 histone deacetylase (HDAC) complexes (involved in the activation and repression of transcription respectively) together (By similarity). As part of the NSL complex it may be involved in acetylation of nucleosomal histone H4 on several lysine residues (By similarity). Recruits KMT2E to E2F1 responsive promoters promoting transcriptional activation and thereby facilitates G1 to S phase transition (By similarity). Modulates expression of homeobox protein PDX1, perhaps acting in concert with transcription factor E2F1, thereby regulating pancreatic beta-cell growth and glucose-stimulated insulin secretion (By similarity). May negatively modulate transcriptional activity of FOXO3 (By similarity).</text>
</comment>
<comment type="subunit">
    <text evidence="2 7 8">Composed predominantly of six polypeptides ranging from 110 to 150 kDa and a minor 300 kDa polypeptide (PubMed:9334261). The majority of N- and C-terminal cleavage products remain tightly, albeit non-covalently, associated (By similarity). Interacts with POU2F1, CREB3, ZBTB17, EGR2, E2F4, CREBZF, SP1, GABP2, Sin3 HDAC complex (SIN3A, HDAC1, HDAC2, SUDS3), SAP30, SIN3B and FHL2 (By similarity). Component of a MLL1 complex, composed of at least the core components KMT2A/MLL1, ASH2L, HCFC1, WDR5 and RBBP5, as well as the facultative components BACC1, CHD8, DPY30, E2F6, HCFC2, HSP70, INO80C, KANSL1, LAS1L, MAX, MCRS1, MEN1, MGA, KAT8, PELP1, PHF20, PRP31, RING2, RUVBL1, RUVBL2, SENP3, TAF1, TAF4, TAF6, TAF7, TAF9 and TEX10 (By similarity). Component of a THAP1/THAP3-HCFC1-OGT complex that is required for the regulation of the transcriptional activity of RRM1 (By similarity). Interacts directly with THAP3 (via its HBM) (By similarity). Interacts (via the Kelch-repeat domain) with THAP1 (via the HBM); the interaction recruits HCHC1 to the RRM1 (By similarity). Interacts with THAP7 and THAP11 (via the HMB) (By similarity). Interacts directly with OGT; the interaction, which requires the HCFC1 cleavage site domain, glycosylates and promotes the proteolytic processing of HCFC1 and retains OGT in the nucleus (By similarity). Component of the SET1 complex, at least composed of the catalytic subunit (SETD1A or SETD1B), WDR5, WDR82, RBBP5, ASH2L, CXXC1, HCFC1 and DPY30 (By similarity). Component of the NSL complex at least composed of MOF/KAT8, KANSL1, KANSL2, KANSL3, MCRS1, PHF20, OGT1/OGT, WDR5 and HCFC1 (By similarity). Component of a complex at least composed of ZNF335, HCFC1, CCAR2, EMSY, MKI67, RBBP5, ASH2L and WDR5; the complex is formed as a result of interactions between components of a nuclear receptor-mediated transcription complex and a histone methylation complex (By similarity). Within the complex interacts with ZNF335 (By similarity). Interacts with TET2 and TET3 (By similarity). Interacts with HCFC1R1 (By similarity). Interacts with THAP11 (PubMed:18585351). Interacts (via Kelch domain) with KMT2E (via HBM motif) (By similarity). Interacts with E2F1 (By similarity). Accessory scaffold component of the polycomb repressive deubiquitinase (PR-DUB) complex, at least composed of BAP1, one of ASXL1, ASXL2 or (probably) ASXL3 and one of MBD5 or MBD6; the PR-DUB core associates with a number of accessory proteins, including FOXK1, FOXK2, KDM1B, HCFC1, YY1 and OGT (By similarity). Interacts with YY1 (via Gly-rich region); the interaction is direct (By similarity). Interacts with BAP1 (via HBM-like motif) (By similarity).</text>
</comment>
<comment type="subcellular location">
    <subcellularLocation>
        <location evidence="2">Nucleus</location>
    </subcellularLocation>
    <subcellularLocation>
        <location evidence="9">Cytoplasm</location>
    </subcellularLocation>
    <text evidence="2 9">HCFC1R1 modulates its subcellular localization and overexpression of HCFC1R1 leads to accumulation of HCFC1 in the cytoplasm (By similarity). Localizes to cytoplasm in trigeminal ganglia (PubMed:9990006). Non-processed HCFC1 associates with chromatin. Colocalizes with CREB3 and CANX in the ER.</text>
</comment>
<comment type="subcellular location">
    <text evidence="9">(Microbial infection) In trigeminal ganglia, becoming nuclear upon HSV reactivation from the latent state.</text>
</comment>
<comment type="tissue specificity">
    <text evidence="8 9">Expressed in liver, pituitary gland, skeletal muscle, kidney, eye and brain (at protein level). Also observed at low level in heart, spleen and lung.</text>
</comment>
<comment type="domain">
    <text evidence="2">The HCF repeat is a highly specific proteolytic cleavage signal.</text>
</comment>
<comment type="domain">
    <text evidence="2">The kelch repeats fold into a 6-bladed kelch beta-propeller called the beta-propeller domain which mediates interaction with HCFC1R1.</text>
</comment>
<comment type="PTM">
    <text evidence="2">Proteolytically cleaved at one or several PPCE--THET sites within the HCF repeats. Further cleavage of the primary N- and C-terminal chains results in a 'trimming' and accumulation of the smaller chains. Cleavage is promoted by O-glycosylation.</text>
</comment>
<comment type="PTM">
    <text evidence="2">O-glycosylated. GlcNAcylation by OGT promotes proteolytic processing.</text>
</comment>
<comment type="PTM">
    <text evidence="2">Ubiquitinated. Lys-1817 and Lys-1818 are ubiquitinated both via 'Lys-48'- and 'Lys-63'-linked polyubiquitin chains. BAP1 mediated deubiquitination of 'Lys-48'-linked polyubiquitin chains; deubiquitination by BAP1 does not seem to stabilize the protein.</text>
</comment>
<comment type="sequence caution" evidence="11">
    <conflict type="frameshift">
        <sequence resource="EMBL-CDS" id="CAF25305"/>
    </conflict>
</comment>
<reference evidence="11 12" key="1">
    <citation type="journal article" date="1997" name="J. Biol. Chem.">
        <title>The mouse homologue of the human transcription factor C1 (host cell factor). Conservation of forms and function.</title>
        <authorList>
            <person name="Kristie T.M."/>
        </authorList>
    </citation>
    <scope>NUCLEOTIDE SEQUENCE [GENOMIC DNA]</scope>
    <scope>FUNCTION</scope>
    <scope>SUBUNIT</scope>
    <scope>TISSUE SPECIFICITY</scope>
    <source>
        <tissue evidence="8">Fetal liver</tissue>
    </source>
</reference>
<reference key="2">
    <citation type="journal article" date="2009" name="PLoS Biol.">
        <title>Lineage-specific biology revealed by a finished genome assembly of the mouse.</title>
        <authorList>
            <person name="Church D.M."/>
            <person name="Goodstadt L."/>
            <person name="Hillier L.W."/>
            <person name="Zody M.C."/>
            <person name="Goldstein S."/>
            <person name="She X."/>
            <person name="Bult C.J."/>
            <person name="Agarwala R."/>
            <person name="Cherry J.L."/>
            <person name="DiCuccio M."/>
            <person name="Hlavina W."/>
            <person name="Kapustin Y."/>
            <person name="Meric P."/>
            <person name="Maglott D."/>
            <person name="Birtle Z."/>
            <person name="Marques A.C."/>
            <person name="Graves T."/>
            <person name="Zhou S."/>
            <person name="Teague B."/>
            <person name="Potamousis K."/>
            <person name="Churas C."/>
            <person name="Place M."/>
            <person name="Herschleb J."/>
            <person name="Runnheim R."/>
            <person name="Forrest D."/>
            <person name="Amos-Landgraf J."/>
            <person name="Schwartz D.C."/>
            <person name="Cheng Z."/>
            <person name="Lindblad-Toh K."/>
            <person name="Eichler E.E."/>
            <person name="Ponting C.P."/>
        </authorList>
    </citation>
    <scope>NUCLEOTIDE SEQUENCE [LARGE SCALE GENOMIC DNA]</scope>
    <source>
        <strain>C57BL/6J</strain>
    </source>
</reference>
<reference evidence="11 14" key="3">
    <citation type="submission" date="2005-09" db="EMBL/GenBank/DDBJ databases">
        <authorList>
            <person name="Mural R.J."/>
            <person name="Adams M.D."/>
            <person name="Myers E.W."/>
            <person name="Smith H.O."/>
            <person name="Venter J.C."/>
        </authorList>
    </citation>
    <scope>NUCLEOTIDE SEQUENCE [LARGE SCALE GENOMIC DNA]</scope>
</reference>
<reference evidence="11 13" key="4">
    <citation type="journal article" date="2004" name="Genome Res.">
        <title>The status, quality, and expansion of the NIH full-length cDNA project: the Mammalian Gene Collection (MGC).</title>
        <authorList>
            <consortium name="The MGC Project Team"/>
        </authorList>
    </citation>
    <scope>NUCLEOTIDE SEQUENCE [LARGE SCALE MRNA]</scope>
    <source>
        <tissue evidence="6">Limb mesenchyme</tissue>
    </source>
</reference>
<reference key="5">
    <citation type="journal article" date="2005" name="Science">
        <title>The transcriptional landscape of the mammalian genome.</title>
        <authorList>
            <person name="Carninci P."/>
            <person name="Kasukawa T."/>
            <person name="Katayama S."/>
            <person name="Gough J."/>
            <person name="Frith M.C."/>
            <person name="Maeda N."/>
            <person name="Oyama R."/>
            <person name="Ravasi T."/>
            <person name="Lenhard B."/>
            <person name="Wells C."/>
            <person name="Kodzius R."/>
            <person name="Shimokawa K."/>
            <person name="Bajic V.B."/>
            <person name="Brenner S.E."/>
            <person name="Batalov S."/>
            <person name="Forrest A.R."/>
            <person name="Zavolan M."/>
            <person name="Davis M.J."/>
            <person name="Wilming L.G."/>
            <person name="Aidinis V."/>
            <person name="Allen J.E."/>
            <person name="Ambesi-Impiombato A."/>
            <person name="Apweiler R."/>
            <person name="Aturaliya R.N."/>
            <person name="Bailey T.L."/>
            <person name="Bansal M."/>
            <person name="Baxter L."/>
            <person name="Beisel K.W."/>
            <person name="Bersano T."/>
            <person name="Bono H."/>
            <person name="Chalk A.M."/>
            <person name="Chiu K.P."/>
            <person name="Choudhary V."/>
            <person name="Christoffels A."/>
            <person name="Clutterbuck D.R."/>
            <person name="Crowe M.L."/>
            <person name="Dalla E."/>
            <person name="Dalrymple B.P."/>
            <person name="de Bono B."/>
            <person name="Della Gatta G."/>
            <person name="di Bernardo D."/>
            <person name="Down T."/>
            <person name="Engstrom P."/>
            <person name="Fagiolini M."/>
            <person name="Faulkner G."/>
            <person name="Fletcher C.F."/>
            <person name="Fukushima T."/>
            <person name="Furuno M."/>
            <person name="Futaki S."/>
            <person name="Gariboldi M."/>
            <person name="Georgii-Hemming P."/>
            <person name="Gingeras T.R."/>
            <person name="Gojobori T."/>
            <person name="Green R.E."/>
            <person name="Gustincich S."/>
            <person name="Harbers M."/>
            <person name="Hayashi Y."/>
            <person name="Hensch T.K."/>
            <person name="Hirokawa N."/>
            <person name="Hill D."/>
            <person name="Huminiecki L."/>
            <person name="Iacono M."/>
            <person name="Ikeo K."/>
            <person name="Iwama A."/>
            <person name="Ishikawa T."/>
            <person name="Jakt M."/>
            <person name="Kanapin A."/>
            <person name="Katoh M."/>
            <person name="Kawasawa Y."/>
            <person name="Kelso J."/>
            <person name="Kitamura H."/>
            <person name="Kitano H."/>
            <person name="Kollias G."/>
            <person name="Krishnan S.P."/>
            <person name="Kruger A."/>
            <person name="Kummerfeld S.K."/>
            <person name="Kurochkin I.V."/>
            <person name="Lareau L.F."/>
            <person name="Lazarevic D."/>
            <person name="Lipovich L."/>
            <person name="Liu J."/>
            <person name="Liuni S."/>
            <person name="McWilliam S."/>
            <person name="Madan Babu M."/>
            <person name="Madera M."/>
            <person name="Marchionni L."/>
            <person name="Matsuda H."/>
            <person name="Matsuzawa S."/>
            <person name="Miki H."/>
            <person name="Mignone F."/>
            <person name="Miyake S."/>
            <person name="Morris K."/>
            <person name="Mottagui-Tabar S."/>
            <person name="Mulder N."/>
            <person name="Nakano N."/>
            <person name="Nakauchi H."/>
            <person name="Ng P."/>
            <person name="Nilsson R."/>
            <person name="Nishiguchi S."/>
            <person name="Nishikawa S."/>
            <person name="Nori F."/>
            <person name="Ohara O."/>
            <person name="Okazaki Y."/>
            <person name="Orlando V."/>
            <person name="Pang K.C."/>
            <person name="Pavan W.J."/>
            <person name="Pavesi G."/>
            <person name="Pesole G."/>
            <person name="Petrovsky N."/>
            <person name="Piazza S."/>
            <person name="Reed J."/>
            <person name="Reid J.F."/>
            <person name="Ring B.Z."/>
            <person name="Ringwald M."/>
            <person name="Rost B."/>
            <person name="Ruan Y."/>
            <person name="Salzberg S.L."/>
            <person name="Sandelin A."/>
            <person name="Schneider C."/>
            <person name="Schoenbach C."/>
            <person name="Sekiguchi K."/>
            <person name="Semple C.A."/>
            <person name="Seno S."/>
            <person name="Sessa L."/>
            <person name="Sheng Y."/>
            <person name="Shibata Y."/>
            <person name="Shimada H."/>
            <person name="Shimada K."/>
            <person name="Silva D."/>
            <person name="Sinclair B."/>
            <person name="Sperling S."/>
            <person name="Stupka E."/>
            <person name="Sugiura K."/>
            <person name="Sultana R."/>
            <person name="Takenaka Y."/>
            <person name="Taki K."/>
            <person name="Tammoja K."/>
            <person name="Tan S.L."/>
            <person name="Tang S."/>
            <person name="Taylor M.S."/>
            <person name="Tegner J."/>
            <person name="Teichmann S.A."/>
            <person name="Ueda H.R."/>
            <person name="van Nimwegen E."/>
            <person name="Verardo R."/>
            <person name="Wei C.L."/>
            <person name="Yagi K."/>
            <person name="Yamanishi H."/>
            <person name="Zabarovsky E."/>
            <person name="Zhu S."/>
            <person name="Zimmer A."/>
            <person name="Hide W."/>
            <person name="Bult C."/>
            <person name="Grimmond S.M."/>
            <person name="Teasdale R.D."/>
            <person name="Liu E.T."/>
            <person name="Brusic V."/>
            <person name="Quackenbush J."/>
            <person name="Wahlestedt C."/>
            <person name="Mattick J.S."/>
            <person name="Hume D.A."/>
            <person name="Kai C."/>
            <person name="Sasaki D."/>
            <person name="Tomaru Y."/>
            <person name="Fukuda S."/>
            <person name="Kanamori-Katayama M."/>
            <person name="Suzuki M."/>
            <person name="Aoki J."/>
            <person name="Arakawa T."/>
            <person name="Iida J."/>
            <person name="Imamura K."/>
            <person name="Itoh M."/>
            <person name="Kato T."/>
            <person name="Kawaji H."/>
            <person name="Kawagashira N."/>
            <person name="Kawashima T."/>
            <person name="Kojima M."/>
            <person name="Kondo S."/>
            <person name="Konno H."/>
            <person name="Nakano K."/>
            <person name="Ninomiya N."/>
            <person name="Nishio T."/>
            <person name="Okada M."/>
            <person name="Plessy C."/>
            <person name="Shibata K."/>
            <person name="Shiraki T."/>
            <person name="Suzuki S."/>
            <person name="Tagami M."/>
            <person name="Waki K."/>
            <person name="Watahiki A."/>
            <person name="Okamura-Oho Y."/>
            <person name="Suzuki H."/>
            <person name="Kawai J."/>
            <person name="Hayashizaki Y."/>
        </authorList>
    </citation>
    <scope>NUCLEOTIDE SEQUENCE [LARGE SCALE MRNA] OF 1-209</scope>
    <source>
        <strain>NOD</strain>
        <tissue>Thymus</tissue>
    </source>
</reference>
<reference evidence="11 14" key="6">
    <citation type="submission" date="2004-02" db="EMBL/GenBank/DDBJ databases">
        <title>Towards functional annotation of all Xq28 genes: expression and intracellular localization analyses reveal novel candidates for disease genes.</title>
        <authorList>
            <person name="Kolb A.A."/>
            <person name="Mehrle A."/>
            <person name="Bechtel S."/>
            <person name="Wellenreuther R."/>
            <person name="Simpson J."/>
            <person name="Pepperkok R."/>
            <person name="Wiemann S."/>
            <person name="Poustka A."/>
        </authorList>
    </citation>
    <scope>NUCLEOTIDE SEQUENCE [MRNA] OF 165-520</scope>
    <source>
        <strain>NMRI</strain>
        <tissue>Embryo</tissue>
    </source>
</reference>
<reference evidence="11" key="7">
    <citation type="journal article" date="1999" name="Proc. Natl. Acad. Sci. U.S.A.">
        <title>Nuclear localization of the C1 factor (host cell factor) in sensory neurons correlates with reactivation of herpes simplex virus from latency.</title>
        <authorList>
            <person name="Kristie T.M."/>
            <person name="Vogel J.L."/>
            <person name="Sears A.E."/>
        </authorList>
    </citation>
    <scope>FUNCTION</scope>
    <scope>SUBCELLULAR LOCATION</scope>
    <scope>TISSUE SPECIFICITY</scope>
    <source>
        <strain evidence="9">BALB/cJ</strain>
    </source>
</reference>
<reference key="8">
    <citation type="journal article" date="2006" name="Mol. Cell. Proteomics">
        <title>O-linked N-acetylglucosamine proteomics of postsynaptic density preparations using lectin weak affinity chromatography and mass spectrometry.</title>
        <authorList>
            <person name="Vosseller K."/>
            <person name="Trinidad J.C."/>
            <person name="Chalkley R.J."/>
            <person name="Specht C.G."/>
            <person name="Thalhammer A."/>
            <person name="Lynn A.J."/>
            <person name="Snedecor J.O."/>
            <person name="Guan S."/>
            <person name="Medzihradszky K.F."/>
            <person name="Maltby D.A."/>
            <person name="Schoepfer R."/>
            <person name="Burlingame A.L."/>
        </authorList>
    </citation>
    <scope>GLYCOSYLATION [LARGE SCALE ANALYSIS]</scope>
    <source>
        <tissue>Brain</tissue>
    </source>
</reference>
<reference key="9">
    <citation type="journal article" date="2008" name="Cell">
        <title>Ronin is essential for embryogenesis and the pluripotency of mouse embryonic stem cells.</title>
        <authorList>
            <person name="Dejosez M."/>
            <person name="Krumenacker J.S."/>
            <person name="Zitur L.J."/>
            <person name="Passeri M."/>
            <person name="Chu L.-F."/>
            <person name="Songyang Z."/>
            <person name="Thomson J.A."/>
            <person name="Zwaka T.P."/>
        </authorList>
    </citation>
    <scope>INTERACTION WITH THAP11</scope>
</reference>
<reference key="10">
    <citation type="journal article" date="2008" name="Cell">
        <authorList>
            <person name="Dejosez M."/>
            <person name="Krumenacker J.S."/>
            <person name="Zitur L.J."/>
            <person name="Passeri M."/>
            <person name="Chu L.-F."/>
            <person name="Songyang Z."/>
            <person name="Thomson J.A."/>
            <person name="Zwaka T.P."/>
        </authorList>
    </citation>
    <scope>ERRATUM OF PUBMED:18585351</scope>
</reference>
<reference key="11">
    <citation type="journal article" date="2009" name="Mol. Cell. Proteomics">
        <title>Large scale localization of protein phosphorylation by use of electron capture dissociation mass spectrometry.</title>
        <authorList>
            <person name="Sweet S.M."/>
            <person name="Bailey C.M."/>
            <person name="Cunningham D.L."/>
            <person name="Heath J.K."/>
            <person name="Cooper H.J."/>
        </authorList>
    </citation>
    <scope>IDENTIFICATION BY MASS SPECTROMETRY [LARGE SCALE ANALYSIS]</scope>
    <source>
        <tissue>Embryonic fibroblast</tissue>
    </source>
</reference>
<reference key="12">
    <citation type="journal article" date="2010" name="Cell">
        <title>A tissue-specific atlas of mouse protein phosphorylation and expression.</title>
        <authorList>
            <person name="Huttlin E.L."/>
            <person name="Jedrychowski M.P."/>
            <person name="Elias J.E."/>
            <person name="Goswami T."/>
            <person name="Rad R."/>
            <person name="Beausoleil S.A."/>
            <person name="Villen J."/>
            <person name="Haas W."/>
            <person name="Sowa M.E."/>
            <person name="Gygi S.P."/>
        </authorList>
    </citation>
    <scope>PHOSPHORYLATION [LARGE SCALE ANALYSIS] AT SER-666; SER-1516 AND SER-1848</scope>
    <scope>IDENTIFICATION BY MASS SPECTROMETRY [LARGE SCALE ANALYSIS]</scope>
    <source>
        <tissue>Brain</tissue>
        <tissue>Brown adipose tissue</tissue>
        <tissue>Heart</tissue>
        <tissue>Kidney</tissue>
        <tissue>Liver</tissue>
        <tissue>Lung</tissue>
        <tissue>Pancreas</tissue>
        <tissue>Spleen</tissue>
        <tissue>Testis</tissue>
    </source>
</reference>
<reference key="13">
    <citation type="journal article" date="2013" name="Mol. Cell">
        <title>SIRT5-mediated lysine desuccinylation impacts diverse metabolic pathways.</title>
        <authorList>
            <person name="Park J."/>
            <person name="Chen Y."/>
            <person name="Tishkoff D.X."/>
            <person name="Peng C."/>
            <person name="Tan M."/>
            <person name="Dai L."/>
            <person name="Xie Z."/>
            <person name="Zhang Y."/>
            <person name="Zwaans B.M."/>
            <person name="Skinner M.E."/>
            <person name="Lombard D.B."/>
            <person name="Zhao Y."/>
        </authorList>
    </citation>
    <scope>ACETYLATION [LARGE SCALE ANALYSIS] AT LYS-288</scope>
    <scope>IDENTIFICATION BY MASS SPECTROMETRY [LARGE SCALE ANALYSIS]</scope>
    <source>
        <tissue>Embryonic fibroblast</tissue>
    </source>
</reference>
<reference key="14">
    <citation type="journal article" date="2014" name="Mol. Cell. Proteomics">
        <title>Immunoaffinity enrichment and mass spectrometry analysis of protein methylation.</title>
        <authorList>
            <person name="Guo A."/>
            <person name="Gu H."/>
            <person name="Zhou J."/>
            <person name="Mulhern D."/>
            <person name="Wang Y."/>
            <person name="Lee K.A."/>
            <person name="Yang V."/>
            <person name="Aguiar M."/>
            <person name="Kornhauser J."/>
            <person name="Jia X."/>
            <person name="Ren J."/>
            <person name="Beausoleil S.A."/>
            <person name="Silva J.C."/>
            <person name="Vemulapalli V."/>
            <person name="Bedford M.T."/>
            <person name="Comb M.J."/>
        </authorList>
    </citation>
    <scope>METHYLATION [LARGE SCALE ANALYSIS] AT ARG-504; ARG-524 AND ARG-1216</scope>
    <scope>IDENTIFICATION BY MASS SPECTROMETRY [LARGE SCALE ANALYSIS]</scope>
    <source>
        <tissue>Brain</tissue>
        <tissue>Embryo</tissue>
    </source>
</reference>
<organism>
    <name type="scientific">Mus musculus</name>
    <name type="common">Mouse</name>
    <dbReference type="NCBI Taxonomy" id="10090"/>
    <lineage>
        <taxon>Eukaryota</taxon>
        <taxon>Metazoa</taxon>
        <taxon>Chordata</taxon>
        <taxon>Craniata</taxon>
        <taxon>Vertebrata</taxon>
        <taxon>Euteleostomi</taxon>
        <taxon>Mammalia</taxon>
        <taxon>Eutheria</taxon>
        <taxon>Euarchontoglires</taxon>
        <taxon>Glires</taxon>
        <taxon>Rodentia</taxon>
        <taxon>Myomorpha</taxon>
        <taxon>Muroidea</taxon>
        <taxon>Muridae</taxon>
        <taxon>Murinae</taxon>
        <taxon>Mus</taxon>
        <taxon>Mus</taxon>
    </lineage>
</organism>
<dbReference type="EMBL" id="U53925">
    <property type="protein sequence ID" value="AAB01163.1"/>
    <property type="molecule type" value="Genomic_DNA"/>
</dbReference>
<dbReference type="EMBL" id="U80821">
    <property type="protein sequence ID" value="AAD09225.1"/>
    <property type="molecule type" value="Genomic_DNA"/>
</dbReference>
<dbReference type="EMBL" id="AL672002">
    <property type="status" value="NOT_ANNOTATED_CDS"/>
    <property type="molecule type" value="Genomic_DNA"/>
</dbReference>
<dbReference type="EMBL" id="CH466650">
    <property type="protein sequence ID" value="EDL29851.1"/>
    <property type="molecule type" value="Genomic_DNA"/>
</dbReference>
<dbReference type="EMBL" id="BC053742">
    <property type="protein sequence ID" value="AAH53742.1"/>
    <property type="molecule type" value="mRNA"/>
</dbReference>
<dbReference type="EMBL" id="AK088827">
    <property type="protein sequence ID" value="BAC40597.1"/>
    <property type="molecule type" value="mRNA"/>
</dbReference>
<dbReference type="EMBL" id="AJ627036">
    <property type="protein sequence ID" value="CAF25305.1"/>
    <property type="status" value="ALT_FRAME"/>
    <property type="molecule type" value="mRNA"/>
</dbReference>
<dbReference type="CCDS" id="CCDS30218.1"/>
<dbReference type="RefSeq" id="NP_032250.2">
    <property type="nucleotide sequence ID" value="NM_008224.4"/>
</dbReference>
<dbReference type="PDB" id="2M26">
    <property type="method" value="NMR"/>
    <property type="chains" value="A=1896-2020"/>
</dbReference>
<dbReference type="PDBsum" id="2M26"/>
<dbReference type="BMRB" id="Q61191"/>
<dbReference type="SMR" id="Q61191"/>
<dbReference type="BioGRID" id="200248">
    <property type="interactions" value="28"/>
</dbReference>
<dbReference type="ComplexPortal" id="CPX-875">
    <property type="entry name" value="NSL histone acetyltransferase complex"/>
</dbReference>
<dbReference type="FunCoup" id="Q61191">
    <property type="interactions" value="3276"/>
</dbReference>
<dbReference type="IntAct" id="Q61191">
    <property type="interactions" value="5"/>
</dbReference>
<dbReference type="MINT" id="Q61191"/>
<dbReference type="STRING" id="10090.ENSMUSP00000033761"/>
<dbReference type="ChEMBL" id="CHEMBL4879471"/>
<dbReference type="GlyGen" id="Q61191">
    <property type="glycosylation" value="100 sites, 1 O-linked glycan (99 sites)"/>
</dbReference>
<dbReference type="iPTMnet" id="Q61191"/>
<dbReference type="PhosphoSitePlus" id="Q61191"/>
<dbReference type="SwissPalm" id="Q61191"/>
<dbReference type="jPOST" id="Q61191"/>
<dbReference type="PaxDb" id="10090-ENSMUSP00000033761"/>
<dbReference type="PeptideAtlas" id="Q61191"/>
<dbReference type="ProteomicsDB" id="269817"/>
<dbReference type="Pumba" id="Q61191"/>
<dbReference type="Antibodypedia" id="7165">
    <property type="antibodies" value="249 antibodies from 33 providers"/>
</dbReference>
<dbReference type="DNASU" id="15161"/>
<dbReference type="Ensembl" id="ENSMUST00000033761.13">
    <property type="protein sequence ID" value="ENSMUSP00000033761.7"/>
    <property type="gene ID" value="ENSMUSG00000031386.15"/>
</dbReference>
<dbReference type="GeneID" id="15161"/>
<dbReference type="KEGG" id="mmu:15161"/>
<dbReference type="UCSC" id="uc009tnm.2">
    <property type="organism name" value="mouse"/>
</dbReference>
<dbReference type="AGR" id="MGI:105942"/>
<dbReference type="CTD" id="3054"/>
<dbReference type="MGI" id="MGI:105942">
    <property type="gene designation" value="Hcfc1"/>
</dbReference>
<dbReference type="VEuPathDB" id="HostDB:ENSMUSG00000031386"/>
<dbReference type="eggNOG" id="KOG4152">
    <property type="taxonomic scope" value="Eukaryota"/>
</dbReference>
<dbReference type="GeneTree" id="ENSGT00940000161383"/>
<dbReference type="HOGENOM" id="CLU_002603_0_0_1"/>
<dbReference type="InParanoid" id="Q61191"/>
<dbReference type="OMA" id="PDYGQMK"/>
<dbReference type="OrthoDB" id="10001928at2759"/>
<dbReference type="TreeFam" id="TF314757"/>
<dbReference type="Reactome" id="R-MMU-3214847">
    <property type="pathway name" value="HATs acetylate histones"/>
</dbReference>
<dbReference type="Reactome" id="R-MMU-5689603">
    <property type="pathway name" value="UCH proteinases"/>
</dbReference>
<dbReference type="Reactome" id="R-MMU-9772755">
    <property type="pathway name" value="Formation of WDR5-containing histone-modifying complexes"/>
</dbReference>
<dbReference type="BioGRID-ORCS" id="15161">
    <property type="hits" value="28 hits in 83 CRISPR screens"/>
</dbReference>
<dbReference type="ChiTaRS" id="Hcfc1">
    <property type="organism name" value="mouse"/>
</dbReference>
<dbReference type="EvolutionaryTrace" id="Q61191"/>
<dbReference type="PRO" id="PR:Q61191"/>
<dbReference type="Proteomes" id="UP000000589">
    <property type="component" value="Chromosome X"/>
</dbReference>
<dbReference type="RNAct" id="Q61191">
    <property type="molecule type" value="protein"/>
</dbReference>
<dbReference type="Bgee" id="ENSMUSG00000031386">
    <property type="expression patterns" value="Expressed in undifferentiated genital tubercle and 260 other cell types or tissues"/>
</dbReference>
<dbReference type="ExpressionAtlas" id="Q61191">
    <property type="expression patterns" value="baseline and differential"/>
</dbReference>
<dbReference type="GO" id="GO:0062023">
    <property type="term" value="C:collagen-containing extracellular matrix"/>
    <property type="evidence" value="ECO:0007005"/>
    <property type="project" value="BHF-UCL"/>
</dbReference>
<dbReference type="GO" id="GO:0005737">
    <property type="term" value="C:cytoplasm"/>
    <property type="evidence" value="ECO:0000314"/>
    <property type="project" value="UniProtKB"/>
</dbReference>
<dbReference type="GO" id="GO:0000123">
    <property type="term" value="C:histone acetyltransferase complex"/>
    <property type="evidence" value="ECO:0000250"/>
    <property type="project" value="UniProtKB"/>
</dbReference>
<dbReference type="GO" id="GO:0071339">
    <property type="term" value="C:MLL1 complex"/>
    <property type="evidence" value="ECO:0000250"/>
    <property type="project" value="UniProtKB"/>
</dbReference>
<dbReference type="GO" id="GO:0043025">
    <property type="term" value="C:neuronal cell body"/>
    <property type="evidence" value="ECO:0000250"/>
    <property type="project" value="UniProtKB"/>
</dbReference>
<dbReference type="GO" id="GO:0044545">
    <property type="term" value="C:NSL complex"/>
    <property type="evidence" value="ECO:0000266"/>
    <property type="project" value="ComplexPortal"/>
</dbReference>
<dbReference type="GO" id="GO:0005634">
    <property type="term" value="C:nucleus"/>
    <property type="evidence" value="ECO:0000314"/>
    <property type="project" value="UniProtKB"/>
</dbReference>
<dbReference type="GO" id="GO:0048188">
    <property type="term" value="C:Set1C/COMPASS complex"/>
    <property type="evidence" value="ECO:0000250"/>
    <property type="project" value="UniProtKB"/>
</dbReference>
<dbReference type="GO" id="GO:0003682">
    <property type="term" value="F:chromatin binding"/>
    <property type="evidence" value="ECO:0000250"/>
    <property type="project" value="UniProtKB"/>
</dbReference>
<dbReference type="GO" id="GO:0031490">
    <property type="term" value="F:chromatin DNA binding"/>
    <property type="evidence" value="ECO:0000314"/>
    <property type="project" value="MGI"/>
</dbReference>
<dbReference type="GO" id="GO:0140297">
    <property type="term" value="F:DNA-binding transcription factor binding"/>
    <property type="evidence" value="ECO:0007669"/>
    <property type="project" value="Ensembl"/>
</dbReference>
<dbReference type="GO" id="GO:0042802">
    <property type="term" value="F:identical protein binding"/>
    <property type="evidence" value="ECO:0007669"/>
    <property type="project" value="Ensembl"/>
</dbReference>
<dbReference type="GO" id="GO:0000978">
    <property type="term" value="F:RNA polymerase II cis-regulatory region sequence-specific DNA binding"/>
    <property type="evidence" value="ECO:0000314"/>
    <property type="project" value="MGI"/>
</dbReference>
<dbReference type="GO" id="GO:0003713">
    <property type="term" value="F:transcription coactivator activity"/>
    <property type="evidence" value="ECO:0000304"/>
    <property type="project" value="UniProtKB"/>
</dbReference>
<dbReference type="GO" id="GO:0001835">
    <property type="term" value="P:blastocyst hatching"/>
    <property type="evidence" value="ECO:0000315"/>
    <property type="project" value="MGI"/>
</dbReference>
<dbReference type="GO" id="GO:0006325">
    <property type="term" value="P:chromatin organization"/>
    <property type="evidence" value="ECO:0007669"/>
    <property type="project" value="UniProtKB-KW"/>
</dbReference>
<dbReference type="GO" id="GO:0000122">
    <property type="term" value="P:negative regulation of transcription by RNA polymerase II"/>
    <property type="evidence" value="ECO:0000250"/>
    <property type="project" value="UniProtKB"/>
</dbReference>
<dbReference type="GO" id="GO:0045893">
    <property type="term" value="P:positive regulation of DNA-templated transcription"/>
    <property type="evidence" value="ECO:0000303"/>
    <property type="project" value="ComplexPortal"/>
</dbReference>
<dbReference type="GO" id="GO:0010628">
    <property type="term" value="P:positive regulation of gene expression"/>
    <property type="evidence" value="ECO:0007669"/>
    <property type="project" value="Ensembl"/>
</dbReference>
<dbReference type="GO" id="GO:0045944">
    <property type="term" value="P:positive regulation of transcription by RNA polymerase II"/>
    <property type="evidence" value="ECO:0007669"/>
    <property type="project" value="Ensembl"/>
</dbReference>
<dbReference type="GO" id="GO:0050821">
    <property type="term" value="P:protein stabilization"/>
    <property type="evidence" value="ECO:0000250"/>
    <property type="project" value="UniProtKB"/>
</dbReference>
<dbReference type="GO" id="GO:0043254">
    <property type="term" value="P:regulation of protein-containing complex assembly"/>
    <property type="evidence" value="ECO:0007669"/>
    <property type="project" value="Ensembl"/>
</dbReference>
<dbReference type="GO" id="GO:0019046">
    <property type="term" value="P:release from viral latency"/>
    <property type="evidence" value="ECO:0000314"/>
    <property type="project" value="UniProtKB"/>
</dbReference>
<dbReference type="CDD" id="cd00063">
    <property type="entry name" value="FN3"/>
    <property type="match status" value="2"/>
</dbReference>
<dbReference type="FunFam" id="2.60.40.10:FF:000443">
    <property type="entry name" value="host cell factor 1"/>
    <property type="match status" value="1"/>
</dbReference>
<dbReference type="FunFam" id="2.60.40.10:FF:000259">
    <property type="entry name" value="Host cell factor 1 (Predicted)"/>
    <property type="match status" value="1"/>
</dbReference>
<dbReference type="FunFam" id="2.120.10.80:FF:000008">
    <property type="entry name" value="host cell factor 1 isoform X1"/>
    <property type="match status" value="1"/>
</dbReference>
<dbReference type="FunFam" id="2.120.10.80:FF:000015">
    <property type="entry name" value="host cell factor 1 isoform X1"/>
    <property type="match status" value="1"/>
</dbReference>
<dbReference type="Gene3D" id="6.10.250.2590">
    <property type="match status" value="1"/>
</dbReference>
<dbReference type="Gene3D" id="2.60.40.10">
    <property type="entry name" value="Immunoglobulins"/>
    <property type="match status" value="2"/>
</dbReference>
<dbReference type="Gene3D" id="2.120.10.80">
    <property type="entry name" value="Kelch-type beta propeller"/>
    <property type="match status" value="2"/>
</dbReference>
<dbReference type="InterPro" id="IPR003961">
    <property type="entry name" value="FN3_dom"/>
</dbReference>
<dbReference type="InterPro" id="IPR036116">
    <property type="entry name" value="FN3_sf"/>
</dbReference>
<dbReference type="InterPro" id="IPR043536">
    <property type="entry name" value="HCF1/2"/>
</dbReference>
<dbReference type="InterPro" id="IPR013783">
    <property type="entry name" value="Ig-like_fold"/>
</dbReference>
<dbReference type="InterPro" id="IPR015915">
    <property type="entry name" value="Kelch-typ_b-propeller"/>
</dbReference>
<dbReference type="PANTHER" id="PTHR46003">
    <property type="entry name" value="HOST CELL FACTOR"/>
    <property type="match status" value="1"/>
</dbReference>
<dbReference type="PANTHER" id="PTHR46003:SF3">
    <property type="entry name" value="HOST CELL FACTOR 1"/>
    <property type="match status" value="1"/>
</dbReference>
<dbReference type="Pfam" id="PF13854">
    <property type="entry name" value="Kelch_HCF"/>
    <property type="match status" value="1"/>
</dbReference>
<dbReference type="SMART" id="SM00060">
    <property type="entry name" value="FN3"/>
    <property type="match status" value="2"/>
</dbReference>
<dbReference type="SUPFAM" id="SSF49265">
    <property type="entry name" value="Fibronectin type III"/>
    <property type="match status" value="1"/>
</dbReference>
<dbReference type="SUPFAM" id="SSF117281">
    <property type="entry name" value="Kelch motif"/>
    <property type="match status" value="1"/>
</dbReference>
<dbReference type="PROSITE" id="PS50853">
    <property type="entry name" value="FN3"/>
    <property type="match status" value="3"/>
</dbReference>
<protein>
    <recommendedName>
        <fullName evidence="10">Host cell factor 1</fullName>
        <shortName evidence="10">HCF</shortName>
        <shortName evidence="2">HCF-1</shortName>
    </recommendedName>
    <alternativeName>
        <fullName evidence="10">C1 factor</fullName>
    </alternativeName>
    <component>
        <recommendedName>
            <fullName evidence="2">HCF N-terminal chain 1</fullName>
        </recommendedName>
    </component>
    <component>
        <recommendedName>
            <fullName evidence="2">HCF N-terminal chain 2</fullName>
        </recommendedName>
    </component>
    <component>
        <recommendedName>
            <fullName evidence="2">HCF N-terminal chain 3</fullName>
        </recommendedName>
    </component>
    <component>
        <recommendedName>
            <fullName evidence="2">HCF N-terminal chain 4</fullName>
        </recommendedName>
    </component>
    <component>
        <recommendedName>
            <fullName evidence="2">HCF N-terminal chain 5</fullName>
        </recommendedName>
    </component>
    <component>
        <recommendedName>
            <fullName evidence="2">HCF N-terminal chain 6</fullName>
        </recommendedName>
    </component>
    <component>
        <recommendedName>
            <fullName evidence="2">HCF C-terminal chain 1</fullName>
        </recommendedName>
    </component>
    <component>
        <recommendedName>
            <fullName evidence="2">HCF C-terminal chain 2</fullName>
        </recommendedName>
    </component>
    <component>
        <recommendedName>
            <fullName evidence="2">HCF C-terminal chain 3</fullName>
        </recommendedName>
    </component>
    <component>
        <recommendedName>
            <fullName evidence="2">HCF C-terminal chain 4</fullName>
        </recommendedName>
    </component>
    <component>
        <recommendedName>
            <fullName evidence="2">HCF C-terminal chain 5</fullName>
        </recommendedName>
    </component>
    <component>
        <recommendedName>
            <fullName evidence="2">HCF C-terminal chain 6</fullName>
        </recommendedName>
    </component>
</protein>
<feature type="initiator methionine" description="Removed" evidence="2">
    <location>
        <position position="1"/>
    </location>
</feature>
<feature type="chain" id="PRO_0000016635" description="HCF N-terminal chain 6" evidence="2">
    <location>
        <begin position="2"/>
        <end position="1432"/>
    </location>
</feature>
<feature type="chain" id="PRO_0000016636" description="HCF N-terminal chain 5" evidence="2">
    <location>
        <begin position="2"/>
        <end position="1332"/>
    </location>
</feature>
<feature type="chain" id="PRO_0000016637" description="HCF N-terminal chain 4" evidence="2">
    <location>
        <begin position="2"/>
        <end position="1304"/>
    </location>
</feature>
<feature type="chain" id="PRO_0000016638" description="HCF N-terminal chain 3" evidence="2">
    <location>
        <begin position="2"/>
        <end position="1110"/>
    </location>
</feature>
<feature type="chain" id="PRO_0000016639" description="HCF N-terminal chain 2" evidence="2">
    <location>
        <begin position="2"/>
        <end position="1081"/>
    </location>
</feature>
<feature type="chain" id="PRO_0000016640" description="HCF N-terminal chain 1" evidence="2">
    <location>
        <begin position="2"/>
        <end position="1019"/>
    </location>
</feature>
<feature type="chain" id="PRO_0000016641" description="HCF C-terminal chain 1" evidence="2">
    <location>
        <begin position="1020"/>
        <end position="2045"/>
    </location>
</feature>
<feature type="chain" id="PRO_0000016642" description="HCF C-terminal chain 2" evidence="2">
    <location>
        <begin position="1082"/>
        <end position="2045"/>
    </location>
</feature>
<feature type="chain" id="PRO_0000016643" description="HCF C-terminal chain 3" evidence="2">
    <location>
        <begin position="1111"/>
        <end position="2045"/>
    </location>
</feature>
<feature type="chain" id="PRO_0000016644" description="HCF C-terminal chain 4" evidence="2">
    <location>
        <begin position="1305"/>
        <end position="2045"/>
    </location>
</feature>
<feature type="chain" id="PRO_0000016645" description="HCF C-terminal chain 5" evidence="2">
    <location>
        <begin position="1333"/>
        <end position="2045"/>
    </location>
</feature>
<feature type="chain" id="PRO_0000016646" description="HCF C-terminal chain 6" evidence="2">
    <location>
        <begin position="1433"/>
        <end position="2045"/>
    </location>
</feature>
<feature type="repeat" description="Kelch 1" evidence="3">
    <location>
        <begin position="44"/>
        <end position="89"/>
    </location>
</feature>
<feature type="repeat" description="Kelch 2" evidence="3">
    <location>
        <begin position="93"/>
        <end position="140"/>
    </location>
</feature>
<feature type="repeat" description="Kelch 3" evidence="3">
    <location>
        <begin position="148"/>
        <end position="194"/>
    </location>
</feature>
<feature type="repeat" description="Kelch 4" evidence="3">
    <location>
        <begin position="217"/>
        <end position="265"/>
    </location>
</feature>
<feature type="repeat" description="Kelch 5" evidence="3">
    <location>
        <begin position="266"/>
        <end position="313"/>
    </location>
</feature>
<feature type="domain" description="Fibronectin type-III 1" evidence="4">
    <location>
        <begin position="366"/>
        <end position="457"/>
    </location>
</feature>
<feature type="repeat" description="HCF repeat 1" evidence="2">
    <location>
        <begin position="1010"/>
        <end position="1035"/>
    </location>
</feature>
<feature type="repeat" description="HCF repeat 2" evidence="2">
    <location>
        <begin position="1072"/>
        <end position="1097"/>
    </location>
</feature>
<feature type="repeat" description="HCF repeat 3" evidence="2">
    <location>
        <begin position="1101"/>
        <end position="1126"/>
    </location>
</feature>
<feature type="repeat" description="HCF repeat 4; degenerate" evidence="2">
    <location>
        <begin position="1157"/>
        <end position="1182"/>
    </location>
</feature>
<feature type="repeat" description="HCF repeat 5" evidence="2">
    <location>
        <begin position="1295"/>
        <end position="1320"/>
    </location>
</feature>
<feature type="repeat" description="HCF repeat 6" evidence="2">
    <location>
        <begin position="1323"/>
        <end position="1348"/>
    </location>
</feature>
<feature type="repeat" description="HCF repeat 7; degenerate" evidence="2">
    <location>
        <begin position="1358"/>
        <end position="1383"/>
    </location>
</feature>
<feature type="repeat" description="HCF repeat 8" evidence="2">
    <location>
        <begin position="1423"/>
        <end position="1448"/>
    </location>
</feature>
<feature type="domain" description="Fibronectin type-III 2" evidence="4">
    <location>
        <begin position="1808"/>
        <end position="1898"/>
    </location>
</feature>
<feature type="domain" description="Fibronectin type-III 3" evidence="4">
    <location>
        <begin position="1900"/>
        <end position="2016"/>
    </location>
</feature>
<feature type="region of interest" description="Disordered" evidence="5">
    <location>
        <begin position="407"/>
        <end position="434"/>
    </location>
</feature>
<feature type="region of interest" description="Required for interaction with OGT" evidence="2">
    <location>
        <begin position="500"/>
        <end position="550"/>
    </location>
</feature>
<feature type="region of interest" description="Interaction with SIN3A" evidence="2">
    <location>
        <begin position="610"/>
        <end position="722"/>
    </location>
</feature>
<feature type="region of interest" description="Interaction with ZBTB17" evidence="2">
    <location>
        <begin position="750"/>
        <end position="902"/>
    </location>
</feature>
<feature type="region of interest" description="Interaction with GABP2" evidence="2">
    <location>
        <begin position="813"/>
        <end position="912"/>
    </location>
</feature>
<feature type="region of interest" description="Disordered" evidence="5">
    <location>
        <begin position="1219"/>
        <end position="1242"/>
    </location>
</feature>
<feature type="region of interest" description="Disordered" evidence="5">
    <location>
        <begin position="1302"/>
        <end position="1375"/>
    </location>
</feature>
<feature type="region of interest" description="Disordered" evidence="5">
    <location>
        <begin position="1444"/>
        <end position="1475"/>
    </location>
</feature>
<feature type="region of interest" description="Disordered" evidence="5">
    <location>
        <begin position="1494"/>
        <end position="1525"/>
    </location>
</feature>
<feature type="region of interest" description="Disordered" evidence="5">
    <location>
        <begin position="2004"/>
        <end position="2045"/>
    </location>
</feature>
<feature type="compositionally biased region" description="Pro residues" evidence="5">
    <location>
        <begin position="413"/>
        <end position="428"/>
    </location>
</feature>
<feature type="compositionally biased region" description="Low complexity" evidence="5">
    <location>
        <begin position="1308"/>
        <end position="1321"/>
    </location>
</feature>
<feature type="compositionally biased region" description="Pro residues" evidence="5">
    <location>
        <begin position="1502"/>
        <end position="1511"/>
    </location>
</feature>
<feature type="site" description="Cleavage; by autolysis" evidence="2">
    <location>
        <begin position="1019"/>
        <end position="1020"/>
    </location>
</feature>
<feature type="site" description="Cleavage; by autolysis" evidence="2">
    <location>
        <begin position="1081"/>
        <end position="1082"/>
    </location>
</feature>
<feature type="site" description="Cleavage; by autolysis" evidence="2">
    <location>
        <begin position="1110"/>
        <end position="1111"/>
    </location>
</feature>
<feature type="site" description="Cleavage; by autolysis" evidence="2">
    <location>
        <begin position="1304"/>
        <end position="1305"/>
    </location>
</feature>
<feature type="site" description="Cleavage; by autolysis" evidence="2">
    <location>
        <begin position="1332"/>
        <end position="1333"/>
    </location>
</feature>
<feature type="site" description="Cleavage; by autolysis" evidence="2">
    <location>
        <begin position="1432"/>
        <end position="1433"/>
    </location>
</feature>
<feature type="modified residue" description="N-acetylalanine" evidence="2">
    <location>
        <position position="2"/>
    </location>
</feature>
<feature type="modified residue" description="Phosphoserine" evidence="2">
    <location>
        <position position="6"/>
    </location>
</feature>
<feature type="modified residue" description="N6-acetyllysine" evidence="17">
    <location>
        <position position="288"/>
    </location>
</feature>
<feature type="modified residue" description="Phosphoserine" evidence="2">
    <location>
        <position position="411"/>
    </location>
</feature>
<feature type="modified residue" description="Omega-N-methylarginine" evidence="18">
    <location>
        <position position="504"/>
    </location>
</feature>
<feature type="modified residue" description="Omega-N-methylarginine" evidence="18">
    <location>
        <position position="524"/>
    </location>
</feature>
<feature type="modified residue" description="Phosphoserine" evidence="2">
    <location>
        <position position="598"/>
    </location>
</feature>
<feature type="modified residue" description="Phosphoserine" evidence="16">
    <location>
        <position position="666"/>
    </location>
</feature>
<feature type="modified residue" description="Phosphoserine" evidence="2">
    <location>
        <position position="669"/>
    </location>
</feature>
<feature type="modified residue" description="N6-acetyllysine" evidence="2">
    <location>
        <position position="813"/>
    </location>
</feature>
<feature type="modified residue" description="Phosphoserine" evidence="2">
    <location>
        <position position="1204"/>
    </location>
</feature>
<feature type="modified residue" description="Asymmetric dimethylarginine" evidence="18">
    <location>
        <position position="1216"/>
    </location>
</feature>
<feature type="modified residue" description="Phosphoserine" evidence="2">
    <location>
        <position position="1223"/>
    </location>
</feature>
<feature type="modified residue" description="Phosphothreonine" evidence="2">
    <location>
        <position position="1500"/>
    </location>
</feature>
<feature type="modified residue" description="Phosphoserine" evidence="2">
    <location>
        <position position="1506"/>
    </location>
</feature>
<feature type="modified residue" description="Phosphoserine" evidence="16">
    <location>
        <position position="1516"/>
    </location>
</feature>
<feature type="modified residue" description="Phosphoserine" evidence="2">
    <location>
        <position position="1781"/>
    </location>
</feature>
<feature type="modified residue" description="Phosphoserine" evidence="16">
    <location>
        <position position="1848"/>
    </location>
</feature>
<feature type="modified residue" description="N6-acetyllysine" evidence="2">
    <location>
        <position position="2015"/>
    </location>
</feature>
<feature type="cross-link" description="Glycyl lysine isopeptide (Lys-Gly) (interchain with G-Cter in ubiquitin)" evidence="2">
    <location>
        <position position="105"/>
    </location>
</feature>
<feature type="cross-link" description="Glycyl lysine isopeptide (Lys-Gly) (interchain with G-Cter in ubiquitin)" evidence="2">
    <location>
        <position position="163"/>
    </location>
</feature>
<feature type="cross-link" description="Glycyl lysine isopeptide (Lys-Gly) (interchain with G-Cter in ubiquitin)" evidence="2">
    <location>
        <position position="244"/>
    </location>
</feature>
<feature type="cross-link" description="Glycyl lysine isopeptide (Lys-Gly) (interchain with G-Cter in SUMO2)" evidence="2">
    <location>
        <position position="282"/>
    </location>
</feature>
<feature type="cross-link" description="Glycyl lysine isopeptide (Lys-Gly) (interchain with G-Cter in ubiquitin)" evidence="2">
    <location>
        <position position="363"/>
    </location>
</feature>
<feature type="cross-link" description="Glycyl lysine isopeptide (Lys-Gly) (interchain with G-Cter in ubiquitin)" evidence="2">
    <location>
        <position position="1817"/>
    </location>
</feature>
<feature type="cross-link" description="Glycyl lysine isopeptide (Lys-Gly) (interchain with G-Cter in ubiquitin)" evidence="2">
    <location>
        <position position="1818"/>
    </location>
</feature>
<feature type="cross-link" description="Glycyl lysine isopeptide (Lys-Gly) (interchain with G-Cter in SUMO2)" evidence="2">
    <location>
        <position position="2034"/>
    </location>
</feature>
<feature type="sequence conflict" description="In Ref. 1; AAB01163/AAD09225." evidence="11" ref="1">
    <original>V</original>
    <variation>R</variation>
    <location>
        <position position="483"/>
    </location>
</feature>
<feature type="sequence conflict" description="In Ref. 6; CAF25305." evidence="11" ref="6">
    <original>P</original>
    <variation>S</variation>
    <location>
        <position position="520"/>
    </location>
</feature>
<feature type="sequence conflict" description="In Ref. 1; AAB01163/AAD09225." evidence="11" ref="1">
    <original>VL</original>
    <variation>AW</variation>
    <location>
        <begin position="567"/>
        <end position="568"/>
    </location>
</feature>
<feature type="sequence conflict" description="In Ref. 1; AAD09225." evidence="11" ref="1">
    <original>Q</original>
    <variation>H</variation>
    <location>
        <position position="711"/>
    </location>
</feature>
<feature type="sequence conflict" description="In Ref. 1; AAB01163/AAD09225." evidence="11" ref="1">
    <original>C</original>
    <variation>S</variation>
    <location>
        <position position="1104"/>
    </location>
</feature>
<feature type="sequence conflict" description="In Ref. 1; AAB01163/AAD09225." evidence="11" ref="1">
    <original>G</original>
    <variation>A</variation>
    <location>
        <position position="1230"/>
    </location>
</feature>
<feature type="strand" evidence="19">
    <location>
        <begin position="1897"/>
        <end position="1899"/>
    </location>
</feature>
<feature type="strand" evidence="19">
    <location>
        <begin position="1905"/>
        <end position="1912"/>
    </location>
</feature>
<feature type="strand" evidence="19">
    <location>
        <begin position="1915"/>
        <end position="1921"/>
    </location>
</feature>
<feature type="strand" evidence="19">
    <location>
        <begin position="1924"/>
        <end position="1926"/>
    </location>
</feature>
<feature type="strand" evidence="19">
    <location>
        <begin position="1930"/>
        <end position="1938"/>
    </location>
</feature>
<feature type="strand" evidence="19">
    <location>
        <begin position="1965"/>
        <end position="1968"/>
    </location>
</feature>
<feature type="helix" evidence="19">
    <location>
        <begin position="1973"/>
        <end position="1977"/>
    </location>
</feature>
<feature type="strand" evidence="19">
    <location>
        <begin position="1984"/>
        <end position="1997"/>
    </location>
</feature>
<feature type="strand" evidence="19">
    <location>
        <begin position="2005"/>
        <end position="2010"/>
    </location>
</feature>
<evidence type="ECO:0000250" key="1">
    <source>
        <dbReference type="UniProtKB" id="D3ZN95"/>
    </source>
</evidence>
<evidence type="ECO:0000250" key="2">
    <source>
        <dbReference type="UniProtKB" id="P51610"/>
    </source>
</evidence>
<evidence type="ECO:0000255" key="3"/>
<evidence type="ECO:0000255" key="4">
    <source>
        <dbReference type="PROSITE-ProRule" id="PRU00316"/>
    </source>
</evidence>
<evidence type="ECO:0000256" key="5">
    <source>
        <dbReference type="SAM" id="MobiDB-lite"/>
    </source>
</evidence>
<evidence type="ECO:0000269" key="6">
    <source>
    </source>
</evidence>
<evidence type="ECO:0000269" key="7">
    <source>
    </source>
</evidence>
<evidence type="ECO:0000269" key="8">
    <source>
    </source>
</evidence>
<evidence type="ECO:0000269" key="9">
    <source>
    </source>
</evidence>
<evidence type="ECO:0000303" key="10">
    <source>
    </source>
</evidence>
<evidence type="ECO:0000305" key="11"/>
<evidence type="ECO:0000312" key="12">
    <source>
        <dbReference type="EMBL" id="AAB01163.1"/>
    </source>
</evidence>
<evidence type="ECO:0000312" key="13">
    <source>
        <dbReference type="EMBL" id="AAH53742.1"/>
    </source>
</evidence>
<evidence type="ECO:0000312" key="14">
    <source>
        <dbReference type="EMBL" id="CAF25305.1"/>
    </source>
</evidence>
<evidence type="ECO:0000312" key="15">
    <source>
        <dbReference type="MGI" id="MGI:105942"/>
    </source>
</evidence>
<evidence type="ECO:0007744" key="16">
    <source>
    </source>
</evidence>
<evidence type="ECO:0007744" key="17">
    <source>
    </source>
</evidence>
<evidence type="ECO:0007744" key="18">
    <source>
    </source>
</evidence>
<evidence type="ECO:0007829" key="19">
    <source>
        <dbReference type="PDB" id="2M26"/>
    </source>
</evidence>
<proteinExistence type="evidence at protein level"/>
<name>HCFC1_MOUSE</name>
<sequence length="2045" mass="210437">MASAVSPANLPAVLLQPRWKRVVGWSGPVPRPRHGHRAVAIKELIVVFGGGNEGIVDELHVYNTATNQWFIPAVRGDIPPGCAAYGFVCDGTRLLVFGGMVEYGKYSNDLYELQASRWEWKRLKAKTPKNGPPPCPRLGHSFSLVGNKCYLFGGLANDSEDPKNNIPRYLNDLYILELRPGSGVVAWDIPITYGVLPPPRESHTAVVYTEKDNKKSKLVIYGGMSGCRLGDLWTLDIETLTWNKPSLSGVAPLPRSLHSATTIGNKMYVFGGWVPLVMDDVKVATHEKEWKCTNTLACLNLDTMAWETILMDTLEDNIPRARAGHCAVAINTRLYIWSGRDGYRKAWNNQVCCKDLWYLETEKPPPPARVQLVRANTNSLEVSWGAVATADSYLLQLQKYDIPATAATATSPTPNPVPSVPANPPKSPAPAAAAPAVQPLTQVGITLVPQAATAPPSTTTIQVLPTVPGSSISVPTAARTQGVPAVLKVTGPQATTGTPLVTMRPASQAGKAPVTVTSLPASVRMVVPTQSAQGTVIGSNPQMSGMAALAAAAAATQKIPPSSAPTVLSVPAGTTIVKTVAVTPGTTTLPATVKVASSPVMVSNPATRMLKTAAAQVGTSVSSAANTSTRPIITVHKSGTVTVAQQAQVVTTVVGGVTKTITLVKSPISVPGGSALISNLGKVMSVVQTKPVQTSAVTGQASTGPVTQIIQTKGPLPAGTILKLVTSADGKPTTIITTTQASGAGTKPTILGISSVSPSTTKPGTTTIIKTIPMSAIITQAGATGVTSSPGIKSPITIITTKVMTSGTGAPAKIITAVPKIATGHGQQGVTQVVLKGAPGQPGTILRTVPMGGVRLVTPVTVSAVKPAVTTLVVKGTTGVTTLGTVTGTVSTSLAGAGAHSTSASLATPITTLGTIATLSSQVINPTAITVSAAQTTLTAAGGLTTPTITMQPVSQPTQVTLITAPSGVEAQPVHDLPVSILASPTTEQPTATVTIADSGQGDVQPGTVTLVCSNPPCETHETGTTNTATTTVVANLGGHPQPTQVQFVCDRQETAASLVTSAVGQQNGNVVRVCSNPPCETHETGTTNTATTATSNMAGQHGCSNPPCETHETGTTSTATTAMSSMGTGQQRDTRRTTNTPTVVRITVAPGALERVQGTVKPQCQTQQTNMTTTTMTVQATGAPCSAGPLLRPSVALESGSHSPAFVQLALPSVRVGLSGPSSKDMPTGRQPETYHTYTTNTPTTTRSIMVAGELGAARVVPTSTYESLQASSPSSTMTMTALEALLCPSATVTQVCSNPPCETHETGTTNTATTSNAGSAQRVCSNPPCETHETGTTHTATTATSNGGAGQPEGGQQPASGHPCETHQTTSTGTTMSVSVGTLIPDATSSHGTLESGLEVVAVPTVTSQAGSTLLASFPTQRVCSNPPCETHETGTTHTATTVTSNMSSNQDPPPAASDQGEVASTQGDSTNITSASAITTSVSSTLPRAVTTVTQSTPVPGPSVPPPEELQVSPGPRQQLPPRQLLQSASTPLMGESTEVLSASQTPELQAAVDLSSTGDPSSGQEPTTSAVVATVVVQPPPPTQSEVDQLSLPQELMAEAQAGTTTLMVTGLTPEELAVTAAAEAAAQAAATEEAQALAIQAVLQAAQQAVMGTGEPMDTSEAAAAVTQAELGHLSAEGQEGQATTIPIVLTQQELAALVQQQQQLQEAQAQAQQQHHLPTEALAPADSLNDPSIESNCLNELASAVPSTVALLPSTATESLAPSNTFVAPQPVVASPAKMQAAATLTEVANGIESLGVKPDLPPPPSKAPVKKENQWFDVGVIKGTSVMVTHYFLPPDDAVQSDDDSGTVPDYNQLKKQELQPGTAYKFRVAGINACGRGPFSEISAFKTCLPGFPGAPCAIKISKSPDGAHLTWEPPSVTSGKIIEYSVYLAIQSSQASGEPKSSTPAQLAFMRVYCGPSPSCLVQSSSLSNAHIDYTTKPAIIFRIAARNEKGYGPATQVRWLQETSKDSSGTKPASKRPMSSPEMKSAPKKSKADGQ</sequence>